<proteinExistence type="inferred from homology"/>
<dbReference type="EC" id="5.3.1.9" evidence="1"/>
<dbReference type="EMBL" id="CP001340">
    <property type="protein sequence ID" value="ACL93689.1"/>
    <property type="molecule type" value="Genomic_DNA"/>
</dbReference>
<dbReference type="RefSeq" id="WP_010918111.1">
    <property type="nucleotide sequence ID" value="NC_011916.1"/>
</dbReference>
<dbReference type="RefSeq" id="YP_002515597.1">
    <property type="nucleotide sequence ID" value="NC_011916.1"/>
</dbReference>
<dbReference type="SMR" id="B8GY92"/>
<dbReference type="GeneID" id="7330268"/>
<dbReference type="KEGG" id="ccs:CCNA_00222"/>
<dbReference type="PATRIC" id="fig|565050.3.peg.219"/>
<dbReference type="HOGENOM" id="CLU_017947_3_1_5"/>
<dbReference type="OrthoDB" id="140919at2"/>
<dbReference type="PhylomeDB" id="B8GY92"/>
<dbReference type="UniPathway" id="UPA00109">
    <property type="reaction ID" value="UER00181"/>
</dbReference>
<dbReference type="UniPathway" id="UPA00138"/>
<dbReference type="Proteomes" id="UP000001364">
    <property type="component" value="Chromosome"/>
</dbReference>
<dbReference type="GO" id="GO:0005829">
    <property type="term" value="C:cytosol"/>
    <property type="evidence" value="ECO:0007669"/>
    <property type="project" value="TreeGrafter"/>
</dbReference>
<dbReference type="GO" id="GO:0097367">
    <property type="term" value="F:carbohydrate derivative binding"/>
    <property type="evidence" value="ECO:0007669"/>
    <property type="project" value="InterPro"/>
</dbReference>
<dbReference type="GO" id="GO:0004347">
    <property type="term" value="F:glucose-6-phosphate isomerase activity"/>
    <property type="evidence" value="ECO:0007669"/>
    <property type="project" value="UniProtKB-UniRule"/>
</dbReference>
<dbReference type="GO" id="GO:0048029">
    <property type="term" value="F:monosaccharide binding"/>
    <property type="evidence" value="ECO:0007669"/>
    <property type="project" value="TreeGrafter"/>
</dbReference>
<dbReference type="GO" id="GO:0006094">
    <property type="term" value="P:gluconeogenesis"/>
    <property type="evidence" value="ECO:0007669"/>
    <property type="project" value="UniProtKB-UniRule"/>
</dbReference>
<dbReference type="GO" id="GO:0051156">
    <property type="term" value="P:glucose 6-phosphate metabolic process"/>
    <property type="evidence" value="ECO:0007669"/>
    <property type="project" value="TreeGrafter"/>
</dbReference>
<dbReference type="GO" id="GO:0006096">
    <property type="term" value="P:glycolytic process"/>
    <property type="evidence" value="ECO:0007669"/>
    <property type="project" value="UniProtKB-UniRule"/>
</dbReference>
<dbReference type="CDD" id="cd05015">
    <property type="entry name" value="SIS_PGI_1"/>
    <property type="match status" value="1"/>
</dbReference>
<dbReference type="CDD" id="cd05016">
    <property type="entry name" value="SIS_PGI_2"/>
    <property type="match status" value="1"/>
</dbReference>
<dbReference type="Gene3D" id="1.10.1390.10">
    <property type="match status" value="1"/>
</dbReference>
<dbReference type="Gene3D" id="3.40.50.10490">
    <property type="entry name" value="Glucose-6-phosphate isomerase like protein, domain 1"/>
    <property type="match status" value="2"/>
</dbReference>
<dbReference type="HAMAP" id="MF_00473">
    <property type="entry name" value="G6P_isomerase"/>
    <property type="match status" value="1"/>
</dbReference>
<dbReference type="InterPro" id="IPR001672">
    <property type="entry name" value="G6P_Isomerase"/>
</dbReference>
<dbReference type="InterPro" id="IPR023096">
    <property type="entry name" value="G6P_Isomerase_C"/>
</dbReference>
<dbReference type="InterPro" id="IPR018189">
    <property type="entry name" value="Phosphoglucose_isomerase_CS"/>
</dbReference>
<dbReference type="InterPro" id="IPR046348">
    <property type="entry name" value="SIS_dom_sf"/>
</dbReference>
<dbReference type="InterPro" id="IPR035476">
    <property type="entry name" value="SIS_PGI_1"/>
</dbReference>
<dbReference type="InterPro" id="IPR035482">
    <property type="entry name" value="SIS_PGI_2"/>
</dbReference>
<dbReference type="NCBIfam" id="NF001211">
    <property type="entry name" value="PRK00179.1"/>
    <property type="match status" value="1"/>
</dbReference>
<dbReference type="PANTHER" id="PTHR11469">
    <property type="entry name" value="GLUCOSE-6-PHOSPHATE ISOMERASE"/>
    <property type="match status" value="1"/>
</dbReference>
<dbReference type="PANTHER" id="PTHR11469:SF1">
    <property type="entry name" value="GLUCOSE-6-PHOSPHATE ISOMERASE"/>
    <property type="match status" value="1"/>
</dbReference>
<dbReference type="Pfam" id="PF00342">
    <property type="entry name" value="PGI"/>
    <property type="match status" value="1"/>
</dbReference>
<dbReference type="PRINTS" id="PR00662">
    <property type="entry name" value="G6PISOMERASE"/>
</dbReference>
<dbReference type="SUPFAM" id="SSF53697">
    <property type="entry name" value="SIS domain"/>
    <property type="match status" value="1"/>
</dbReference>
<dbReference type="PROSITE" id="PS00765">
    <property type="entry name" value="P_GLUCOSE_ISOMERASE_1"/>
    <property type="match status" value="1"/>
</dbReference>
<dbReference type="PROSITE" id="PS00174">
    <property type="entry name" value="P_GLUCOSE_ISOMERASE_2"/>
    <property type="match status" value="1"/>
</dbReference>
<dbReference type="PROSITE" id="PS51463">
    <property type="entry name" value="P_GLUCOSE_ISOMERASE_3"/>
    <property type="match status" value="1"/>
</dbReference>
<reference key="1">
    <citation type="journal article" date="2010" name="J. Bacteriol.">
        <title>The genetic basis of laboratory adaptation in Caulobacter crescentus.</title>
        <authorList>
            <person name="Marks M.E."/>
            <person name="Castro-Rojas C.M."/>
            <person name="Teiling C."/>
            <person name="Du L."/>
            <person name="Kapatral V."/>
            <person name="Walunas T.L."/>
            <person name="Crosson S."/>
        </authorList>
    </citation>
    <scope>NUCLEOTIDE SEQUENCE [LARGE SCALE GENOMIC DNA]</scope>
    <source>
        <strain>NA1000 / CB15N</strain>
    </source>
</reference>
<evidence type="ECO:0000255" key="1">
    <source>
        <dbReference type="HAMAP-Rule" id="MF_00473"/>
    </source>
</evidence>
<evidence type="ECO:0000256" key="2">
    <source>
        <dbReference type="SAM" id="MobiDB-lite"/>
    </source>
</evidence>
<accession>B8GY92</accession>
<protein>
    <recommendedName>
        <fullName evidence="1">Glucose-6-phosphate isomerase</fullName>
        <shortName evidence="1">GPI</shortName>
        <ecNumber evidence="1">5.3.1.9</ecNumber>
    </recommendedName>
    <alternativeName>
        <fullName evidence="1">Phosphoglucose isomerase</fullName>
        <shortName evidence="1">PGI</shortName>
    </alternativeName>
    <alternativeName>
        <fullName evidence="1">Phosphohexose isomerase</fullName>
        <shortName evidence="1">PHI</shortName>
    </alternativeName>
</protein>
<gene>
    <name evidence="1" type="primary">pgi</name>
    <name type="ordered locus">CCNA_00222</name>
</gene>
<name>G6PI_CAUVN</name>
<comment type="function">
    <text evidence="1">Catalyzes the reversible isomerization of glucose-6-phosphate to fructose-6-phosphate.</text>
</comment>
<comment type="catalytic activity">
    <reaction evidence="1">
        <text>alpha-D-glucose 6-phosphate = beta-D-fructose 6-phosphate</text>
        <dbReference type="Rhea" id="RHEA:11816"/>
        <dbReference type="ChEBI" id="CHEBI:57634"/>
        <dbReference type="ChEBI" id="CHEBI:58225"/>
        <dbReference type="EC" id="5.3.1.9"/>
    </reaction>
</comment>
<comment type="pathway">
    <text evidence="1">Carbohydrate biosynthesis; gluconeogenesis.</text>
</comment>
<comment type="pathway">
    <text evidence="1">Carbohydrate degradation; glycolysis; D-glyceraldehyde 3-phosphate and glycerone phosphate from D-glucose: step 2/4.</text>
</comment>
<comment type="subcellular location">
    <subcellularLocation>
        <location evidence="1">Cytoplasm</location>
    </subcellularLocation>
</comment>
<comment type="similarity">
    <text evidence="1">Belongs to the GPI family.</text>
</comment>
<organism>
    <name type="scientific">Caulobacter vibrioides (strain NA1000 / CB15N)</name>
    <name type="common">Caulobacter crescentus</name>
    <dbReference type="NCBI Taxonomy" id="565050"/>
    <lineage>
        <taxon>Bacteria</taxon>
        <taxon>Pseudomonadati</taxon>
        <taxon>Pseudomonadota</taxon>
        <taxon>Alphaproteobacteria</taxon>
        <taxon>Caulobacterales</taxon>
        <taxon>Caulobacteraceae</taxon>
        <taxon>Caulobacter</taxon>
    </lineage>
</organism>
<feature type="chain" id="PRO_1000135522" description="Glucose-6-phosphate isomerase">
    <location>
        <begin position="1"/>
        <end position="539"/>
    </location>
</feature>
<feature type="region of interest" description="Disordered" evidence="2">
    <location>
        <begin position="519"/>
        <end position="539"/>
    </location>
</feature>
<feature type="active site" description="Proton donor" evidence="1">
    <location>
        <position position="349"/>
    </location>
</feature>
<feature type="active site" evidence="1">
    <location>
        <position position="380"/>
    </location>
</feature>
<feature type="active site" evidence="1">
    <location>
        <position position="508"/>
    </location>
</feature>
<keyword id="KW-0963">Cytoplasm</keyword>
<keyword id="KW-0312">Gluconeogenesis</keyword>
<keyword id="KW-0324">Glycolysis</keyword>
<keyword id="KW-0413">Isomerase</keyword>
<keyword id="KW-1185">Reference proteome</keyword>
<sequence length="539" mass="57526">MADLDAAWTRLEAAAKAAGDKRIVEFFDAEPGRLDALTLDVAGLHLDLSKQAWDEAGLEAALDLAHAADVEGARARMFDGEAINSSEGRAVLHTALRAPAGADVKALGQPVMAEVDAVRQRMKAFAQAVRSGAIKGATGKPFKAILHIGIGGSDLGPRLLWDALRPVKPSIDLRFVANVDGAEFALTTADMDPEETLVMVVSKTFTTQETMANAGAARAWLVAALGEQGANQHLAAISTALDKTAAFGVPDDRVFGFWDWVGGRYSLWSSVSLSVAVAAGWDAFQGFLDGGAAMDEHFRTAPLEQNAPVLVALAQIFNRNGLDRRARSVVPYSHRLRRLAAFLQQLEMESNGKSVGPDGQPAKRGTATVVFGDEGTNVQHAYFQCMHQGTDITPMELIGVAKSDEGPAGMHEKLLSNLLAQAEAFMVGRTTDDVVAELTAKGVSDAEIATLAPQRTFAGNRPSTLVLLDRLTPQTFGALIALYEHKTFVEGVIWGINSFDQWGVELGKVMANRILPELESGASGQHDPSTAGLIQRLKR</sequence>